<feature type="chain" id="PRO_1000065510" description="Chaperone protein TorD">
    <location>
        <begin position="1"/>
        <end position="199"/>
    </location>
</feature>
<evidence type="ECO:0000255" key="1">
    <source>
        <dbReference type="HAMAP-Rule" id="MF_01150"/>
    </source>
</evidence>
<proteinExistence type="inferred from homology"/>
<keyword id="KW-0143">Chaperone</keyword>
<keyword id="KW-0963">Cytoplasm</keyword>
<keyword id="KW-1185">Reference proteome</keyword>
<dbReference type="EMBL" id="CP000034">
    <property type="protein sequence ID" value="ABB61141.1"/>
    <property type="molecule type" value="Genomic_DNA"/>
</dbReference>
<dbReference type="RefSeq" id="WP_000209888.1">
    <property type="nucleotide sequence ID" value="NC_007606.1"/>
</dbReference>
<dbReference type="RefSeq" id="YP_402632.1">
    <property type="nucleotide sequence ID" value="NC_007606.1"/>
</dbReference>
<dbReference type="SMR" id="Q32HR4"/>
<dbReference type="STRING" id="300267.SDY_0972"/>
<dbReference type="EnsemblBacteria" id="ABB61141">
    <property type="protein sequence ID" value="ABB61141"/>
    <property type="gene ID" value="SDY_0972"/>
</dbReference>
<dbReference type="KEGG" id="sdy:SDY_0972"/>
<dbReference type="PATRIC" id="fig|300267.13.peg.1127"/>
<dbReference type="HOGENOM" id="CLU_077650_4_0_6"/>
<dbReference type="Proteomes" id="UP000002716">
    <property type="component" value="Chromosome"/>
</dbReference>
<dbReference type="GO" id="GO:0005737">
    <property type="term" value="C:cytoplasm"/>
    <property type="evidence" value="ECO:0007669"/>
    <property type="project" value="UniProtKB-SubCell"/>
</dbReference>
<dbReference type="GO" id="GO:0051259">
    <property type="term" value="P:protein complex oligomerization"/>
    <property type="evidence" value="ECO:0007669"/>
    <property type="project" value="InterPro"/>
</dbReference>
<dbReference type="GO" id="GO:0006457">
    <property type="term" value="P:protein folding"/>
    <property type="evidence" value="ECO:0007669"/>
    <property type="project" value="UniProtKB-UniRule"/>
</dbReference>
<dbReference type="FunFam" id="1.20.120.1820:FF:000001">
    <property type="entry name" value="Chaperone protein TorD"/>
    <property type="match status" value="1"/>
</dbReference>
<dbReference type="Gene3D" id="1.20.120.1820">
    <property type="match status" value="1"/>
</dbReference>
<dbReference type="Gene3D" id="1.20.1280.20">
    <property type="entry name" value="HscB, C-terminal domain"/>
    <property type="match status" value="1"/>
</dbReference>
<dbReference type="HAMAP" id="MF_01150">
    <property type="entry name" value="TorD"/>
    <property type="match status" value="1"/>
</dbReference>
<dbReference type="InterPro" id="IPR023069">
    <property type="entry name" value="Chaperone_TorD"/>
</dbReference>
<dbReference type="InterPro" id="IPR020945">
    <property type="entry name" value="DMSO/NO3_reduct_chaperone"/>
</dbReference>
<dbReference type="InterPro" id="IPR036386">
    <property type="entry name" value="HscB_C_sf"/>
</dbReference>
<dbReference type="InterPro" id="IPR036411">
    <property type="entry name" value="TorD-like_sf"/>
</dbReference>
<dbReference type="InterPro" id="IPR050289">
    <property type="entry name" value="TorD/DmsD_chaperones"/>
</dbReference>
<dbReference type="NCBIfam" id="NF003442">
    <property type="entry name" value="PRK04976.1"/>
    <property type="match status" value="1"/>
</dbReference>
<dbReference type="PANTHER" id="PTHR34227:SF11">
    <property type="entry name" value="CHAPERONE PROTEIN TORD"/>
    <property type="match status" value="1"/>
</dbReference>
<dbReference type="PANTHER" id="PTHR34227">
    <property type="entry name" value="CHAPERONE PROTEIN YCDY"/>
    <property type="match status" value="1"/>
</dbReference>
<dbReference type="Pfam" id="PF02613">
    <property type="entry name" value="Nitrate_red_del"/>
    <property type="match status" value="1"/>
</dbReference>
<dbReference type="SUPFAM" id="SSF89155">
    <property type="entry name" value="TorD-like"/>
    <property type="match status" value="1"/>
</dbReference>
<accession>Q32HR4</accession>
<protein>
    <recommendedName>
        <fullName evidence="1">Chaperone protein TorD</fullName>
    </recommendedName>
</protein>
<reference key="1">
    <citation type="journal article" date="2005" name="Nucleic Acids Res.">
        <title>Genome dynamics and diversity of Shigella species, the etiologic agents of bacillary dysentery.</title>
        <authorList>
            <person name="Yang F."/>
            <person name="Yang J."/>
            <person name="Zhang X."/>
            <person name="Chen L."/>
            <person name="Jiang Y."/>
            <person name="Yan Y."/>
            <person name="Tang X."/>
            <person name="Wang J."/>
            <person name="Xiong Z."/>
            <person name="Dong J."/>
            <person name="Xue Y."/>
            <person name="Zhu Y."/>
            <person name="Xu X."/>
            <person name="Sun L."/>
            <person name="Chen S."/>
            <person name="Nie H."/>
            <person name="Peng J."/>
            <person name="Xu J."/>
            <person name="Wang Y."/>
            <person name="Yuan Z."/>
            <person name="Wen Y."/>
            <person name="Yao Z."/>
            <person name="Shen Y."/>
            <person name="Qiang B."/>
            <person name="Hou Y."/>
            <person name="Yu J."/>
            <person name="Jin Q."/>
        </authorList>
    </citation>
    <scope>NUCLEOTIDE SEQUENCE [LARGE SCALE GENOMIC DNA]</scope>
    <source>
        <strain>Sd197</strain>
    </source>
</reference>
<organism>
    <name type="scientific">Shigella dysenteriae serotype 1 (strain Sd197)</name>
    <dbReference type="NCBI Taxonomy" id="300267"/>
    <lineage>
        <taxon>Bacteria</taxon>
        <taxon>Pseudomonadati</taxon>
        <taxon>Pseudomonadota</taxon>
        <taxon>Gammaproteobacteria</taxon>
        <taxon>Enterobacterales</taxon>
        <taxon>Enterobacteriaceae</taxon>
        <taxon>Shigella</taxon>
    </lineage>
</organism>
<gene>
    <name evidence="1" type="primary">torD</name>
    <name type="ordered locus">SDY_0972</name>
</gene>
<comment type="function">
    <text evidence="1">Involved in the biogenesis of TorA. Acts on TorA before the insertion of the molybdenum cofactor and, as a result, probably favors a conformation of the apoenzyme that is competent for acquiring the cofactor.</text>
</comment>
<comment type="subcellular location">
    <subcellularLocation>
        <location evidence="1">Cytoplasm</location>
    </subcellularLocation>
</comment>
<comment type="similarity">
    <text evidence="1">Belongs to the TorD/DmsD family. TorD subfamily.</text>
</comment>
<name>TORD_SHIDS</name>
<sequence length="199" mass="22442">MTTLTAQQIACVYAWLAQLFSRELDDEQLTQIASAQMAEWFSLLKSEPPLTAAVNELENCVATLTVRDDARLELAADFCGLFLMTDKQAALPYASAYKQDEQEIKRLLVEAGMETSGNFNEPADHLAIYLELLSHLHFSLGEGTVPARRIDSLRQKTLTALWQWLPEFVARCHQYDSFGFYAALSQLLLVLVEGDHQNR</sequence>